<gene>
    <name type="primary">rsfA</name>
    <name type="ordered locus">MT1411</name>
</gene>
<dbReference type="EMBL" id="AE000516">
    <property type="protein sequence ID" value="AAK45674.1"/>
    <property type="molecule type" value="Genomic_DNA"/>
</dbReference>
<dbReference type="PIR" id="D70742">
    <property type="entry name" value="D70742"/>
</dbReference>
<dbReference type="RefSeq" id="WP_003898845.1">
    <property type="nucleotide sequence ID" value="NZ_KK341227.1"/>
</dbReference>
<dbReference type="SMR" id="P9WGE2"/>
<dbReference type="GeneID" id="45425345"/>
<dbReference type="KEGG" id="mtc:MT1411"/>
<dbReference type="PATRIC" id="fig|83331.31.peg.1517"/>
<dbReference type="HOGENOM" id="CLU_115403_5_0_11"/>
<dbReference type="Proteomes" id="UP000001020">
    <property type="component" value="Chromosome"/>
</dbReference>
<dbReference type="GO" id="GO:0043856">
    <property type="term" value="F:anti-sigma factor antagonist activity"/>
    <property type="evidence" value="ECO:0007669"/>
    <property type="project" value="InterPro"/>
</dbReference>
<dbReference type="CDD" id="cd07043">
    <property type="entry name" value="STAS_anti-anti-sigma_factors"/>
    <property type="match status" value="1"/>
</dbReference>
<dbReference type="FunFam" id="3.30.750.24:FF:000032">
    <property type="entry name" value="Anti-sigma factor antagonist"/>
    <property type="match status" value="1"/>
</dbReference>
<dbReference type="Gene3D" id="3.30.750.24">
    <property type="entry name" value="STAS domain"/>
    <property type="match status" value="1"/>
</dbReference>
<dbReference type="InterPro" id="IPR003658">
    <property type="entry name" value="Anti-sigma_ant"/>
</dbReference>
<dbReference type="InterPro" id="IPR002645">
    <property type="entry name" value="STAS_dom"/>
</dbReference>
<dbReference type="InterPro" id="IPR036513">
    <property type="entry name" value="STAS_dom_sf"/>
</dbReference>
<dbReference type="NCBIfam" id="TIGR00377">
    <property type="entry name" value="ant_ant_sig"/>
    <property type="match status" value="1"/>
</dbReference>
<dbReference type="PANTHER" id="PTHR33495:SF2">
    <property type="entry name" value="ANTI-SIGMA FACTOR ANTAGONIST TM_1081-RELATED"/>
    <property type="match status" value="1"/>
</dbReference>
<dbReference type="PANTHER" id="PTHR33495">
    <property type="entry name" value="ANTI-SIGMA FACTOR ANTAGONIST TM_1081-RELATED-RELATED"/>
    <property type="match status" value="1"/>
</dbReference>
<dbReference type="Pfam" id="PF01740">
    <property type="entry name" value="STAS"/>
    <property type="match status" value="1"/>
</dbReference>
<dbReference type="SUPFAM" id="SSF52091">
    <property type="entry name" value="SpoIIaa-like"/>
    <property type="match status" value="1"/>
</dbReference>
<dbReference type="PROSITE" id="PS50801">
    <property type="entry name" value="STAS"/>
    <property type="match status" value="1"/>
</dbReference>
<protein>
    <recommendedName>
        <fullName>Anti-sigma-F factor antagonist RsfA</fullName>
    </recommendedName>
    <alternativeName>
        <fullName>Anti-anti-sigma F factor RsfA</fullName>
    </alternativeName>
</protein>
<accession>P9WGE2</accession>
<accession>L0T9F0</accession>
<accession>Q11035</accession>
<reference key="1">
    <citation type="journal article" date="2002" name="J. Bacteriol.">
        <title>Whole-genome comparison of Mycobacterium tuberculosis clinical and laboratory strains.</title>
        <authorList>
            <person name="Fleischmann R.D."/>
            <person name="Alland D."/>
            <person name="Eisen J.A."/>
            <person name="Carpenter L."/>
            <person name="White O."/>
            <person name="Peterson J.D."/>
            <person name="DeBoy R.T."/>
            <person name="Dodson R.J."/>
            <person name="Gwinn M.L."/>
            <person name="Haft D.H."/>
            <person name="Hickey E.K."/>
            <person name="Kolonay J.F."/>
            <person name="Nelson W.C."/>
            <person name="Umayam L.A."/>
            <person name="Ermolaeva M.D."/>
            <person name="Salzberg S.L."/>
            <person name="Delcher A."/>
            <person name="Utterback T.R."/>
            <person name="Weidman J.F."/>
            <person name="Khouri H.M."/>
            <person name="Gill J."/>
            <person name="Mikula A."/>
            <person name="Bishai W."/>
            <person name="Jacobs W.R. Jr."/>
            <person name="Venter J.C."/>
            <person name="Fraser C.M."/>
        </authorList>
    </citation>
    <scope>NUCLEOTIDE SEQUENCE [LARGE SCALE GENOMIC DNA]</scope>
    <source>
        <strain>CDC 1551 / Oshkosh</strain>
    </source>
</reference>
<evidence type="ECO:0000250" key="1"/>
<evidence type="ECO:0000255" key="2">
    <source>
        <dbReference type="PROSITE-ProRule" id="PRU00198"/>
    </source>
</evidence>
<evidence type="ECO:0000305" key="3"/>
<keyword id="KW-1015">Disulfide bond</keyword>
<keyword id="KW-1185">Reference proteome</keyword>
<keyword id="KW-0804">Transcription</keyword>
<keyword id="KW-0805">Transcription regulation</keyword>
<proteinExistence type="inferred from homology"/>
<comment type="function">
    <text evidence="1">Positive, redox-sensitive regulator of sigma-F (SigF) activity. When reduced binds to anti-sigma-F factor RsbW (UsfX) preventing its binding to SigF, thus activating transcription (By similarity).</text>
</comment>
<comment type="subunit">
    <text evidence="1">Monomer. Interacts with anti-sigma-F factor RsbW (UsfX) (By similarity).</text>
</comment>
<comment type="similarity">
    <text evidence="3">Belongs to the anti-sigma-factor antagonist family.</text>
</comment>
<sequence>MNPTQAGSFTTPVSNALKATIQHHDSAVIIHARGEIDAANEHTWQDLVTKAAAATTAPEPLVVNLNGLDFMGCCAVAVLAHEAERCRRRGVDVRLVSRDRAVARIIHACGYGDVLPVHPTTESALSAT</sequence>
<name>RSFA_MYCTO</name>
<organism>
    <name type="scientific">Mycobacterium tuberculosis (strain CDC 1551 / Oshkosh)</name>
    <dbReference type="NCBI Taxonomy" id="83331"/>
    <lineage>
        <taxon>Bacteria</taxon>
        <taxon>Bacillati</taxon>
        <taxon>Actinomycetota</taxon>
        <taxon>Actinomycetes</taxon>
        <taxon>Mycobacteriales</taxon>
        <taxon>Mycobacteriaceae</taxon>
        <taxon>Mycobacterium</taxon>
        <taxon>Mycobacterium tuberculosis complex</taxon>
    </lineage>
</organism>
<feature type="chain" id="PRO_0000428377" description="Anti-sigma-F factor antagonist RsfA">
    <location>
        <begin position="1"/>
        <end position="128"/>
    </location>
</feature>
<feature type="domain" description="STAS" evidence="2">
    <location>
        <begin position="17"/>
        <end position="128"/>
    </location>
</feature>
<feature type="disulfide bond" evidence="1">
    <location>
        <begin position="73"/>
        <end position="109"/>
    </location>
</feature>